<sequence length="210" mass="22466">MIAVINYGAGNLPNAVRALEYVQAPIEVVTDPAAVRAAQAVVLPGVGATADTMRSLREMGMDSAIREVIARGTPFLGICVGMQVLAEQSEEFGLHECLGLVPGTIRRFDQGLKVPQIGWNGVQHDGSALWDGIPNGAEFYFVHSYYLATDDVALVTGRTEYGLNFPAAIARDNITAVQFHPEKSGQWGLKLLGNWVELALSRGSGVGDRA</sequence>
<comment type="function">
    <text evidence="1">IGPS catalyzes the conversion of PRFAR and glutamine to IGP, AICAR and glutamate. The HisH subunit catalyzes the hydrolysis of glutamine to glutamate and ammonia as part of the synthesis of IGP and AICAR. The resulting ammonia molecule is channeled to the active site of HisF.</text>
</comment>
<comment type="catalytic activity">
    <reaction evidence="1">
        <text>5-[(5-phospho-1-deoxy-D-ribulos-1-ylimino)methylamino]-1-(5-phospho-beta-D-ribosyl)imidazole-4-carboxamide + L-glutamine = D-erythro-1-(imidazol-4-yl)glycerol 3-phosphate + 5-amino-1-(5-phospho-beta-D-ribosyl)imidazole-4-carboxamide + L-glutamate + H(+)</text>
        <dbReference type="Rhea" id="RHEA:24793"/>
        <dbReference type="ChEBI" id="CHEBI:15378"/>
        <dbReference type="ChEBI" id="CHEBI:29985"/>
        <dbReference type="ChEBI" id="CHEBI:58278"/>
        <dbReference type="ChEBI" id="CHEBI:58359"/>
        <dbReference type="ChEBI" id="CHEBI:58475"/>
        <dbReference type="ChEBI" id="CHEBI:58525"/>
        <dbReference type="EC" id="4.3.2.10"/>
    </reaction>
</comment>
<comment type="catalytic activity">
    <reaction evidence="1">
        <text>L-glutamine + H2O = L-glutamate + NH4(+)</text>
        <dbReference type="Rhea" id="RHEA:15889"/>
        <dbReference type="ChEBI" id="CHEBI:15377"/>
        <dbReference type="ChEBI" id="CHEBI:28938"/>
        <dbReference type="ChEBI" id="CHEBI:29985"/>
        <dbReference type="ChEBI" id="CHEBI:58359"/>
        <dbReference type="EC" id="3.5.1.2"/>
    </reaction>
</comment>
<comment type="pathway">
    <text evidence="1">Amino-acid biosynthesis; L-histidine biosynthesis; L-histidine from 5-phospho-alpha-D-ribose 1-diphosphate: step 5/9.</text>
</comment>
<comment type="subunit">
    <text evidence="1">Heterodimer of HisH and HisF.</text>
</comment>
<comment type="subcellular location">
    <subcellularLocation>
        <location evidence="1">Cytoplasm</location>
    </subcellularLocation>
</comment>
<evidence type="ECO:0000255" key="1">
    <source>
        <dbReference type="HAMAP-Rule" id="MF_00278"/>
    </source>
</evidence>
<name>HIS5_HERA2</name>
<gene>
    <name evidence="1" type="primary">hisH</name>
    <name type="ordered locus">Haur_0155</name>
</gene>
<proteinExistence type="inferred from homology"/>
<reference key="1">
    <citation type="journal article" date="2011" name="Stand. Genomic Sci.">
        <title>Complete genome sequence of the filamentous gliding predatory bacterium Herpetosiphon aurantiacus type strain (114-95(T)).</title>
        <authorList>
            <person name="Kiss H."/>
            <person name="Nett M."/>
            <person name="Domin N."/>
            <person name="Martin K."/>
            <person name="Maresca J.A."/>
            <person name="Copeland A."/>
            <person name="Lapidus A."/>
            <person name="Lucas S."/>
            <person name="Berry K.W."/>
            <person name="Glavina Del Rio T."/>
            <person name="Dalin E."/>
            <person name="Tice H."/>
            <person name="Pitluck S."/>
            <person name="Richardson P."/>
            <person name="Bruce D."/>
            <person name="Goodwin L."/>
            <person name="Han C."/>
            <person name="Detter J.C."/>
            <person name="Schmutz J."/>
            <person name="Brettin T."/>
            <person name="Land M."/>
            <person name="Hauser L."/>
            <person name="Kyrpides N.C."/>
            <person name="Ivanova N."/>
            <person name="Goeker M."/>
            <person name="Woyke T."/>
            <person name="Klenk H.P."/>
            <person name="Bryant D.A."/>
        </authorList>
    </citation>
    <scope>NUCLEOTIDE SEQUENCE [LARGE SCALE GENOMIC DNA]</scope>
    <source>
        <strain>ATCC 23779 / DSM 785 / 114-95</strain>
    </source>
</reference>
<protein>
    <recommendedName>
        <fullName evidence="1">Imidazole glycerol phosphate synthase subunit HisH</fullName>
        <ecNumber evidence="1">4.3.2.10</ecNumber>
    </recommendedName>
    <alternativeName>
        <fullName evidence="1">IGP synthase glutaminase subunit</fullName>
        <ecNumber evidence="1">3.5.1.2</ecNumber>
    </alternativeName>
    <alternativeName>
        <fullName evidence="1">IGP synthase subunit HisH</fullName>
    </alternativeName>
    <alternativeName>
        <fullName evidence="1">ImGP synthase subunit HisH</fullName>
        <shortName evidence="1">IGPS subunit HisH</shortName>
    </alternativeName>
</protein>
<organism>
    <name type="scientific">Herpetosiphon aurantiacus (strain ATCC 23779 / DSM 785 / 114-95)</name>
    <dbReference type="NCBI Taxonomy" id="316274"/>
    <lineage>
        <taxon>Bacteria</taxon>
        <taxon>Bacillati</taxon>
        <taxon>Chloroflexota</taxon>
        <taxon>Chloroflexia</taxon>
        <taxon>Herpetosiphonales</taxon>
        <taxon>Herpetosiphonaceae</taxon>
        <taxon>Herpetosiphon</taxon>
    </lineage>
</organism>
<accession>A9B5I2</accession>
<feature type="chain" id="PRO_1000114781" description="Imidazole glycerol phosphate synthase subunit HisH">
    <location>
        <begin position="1"/>
        <end position="210"/>
    </location>
</feature>
<feature type="domain" description="Glutamine amidotransferase type-1" evidence="1">
    <location>
        <begin position="1"/>
        <end position="205"/>
    </location>
</feature>
<feature type="active site" description="Nucleophile" evidence="1">
    <location>
        <position position="79"/>
    </location>
</feature>
<feature type="active site" evidence="1">
    <location>
        <position position="180"/>
    </location>
</feature>
<feature type="active site" evidence="1">
    <location>
        <position position="182"/>
    </location>
</feature>
<dbReference type="EC" id="4.3.2.10" evidence="1"/>
<dbReference type="EC" id="3.5.1.2" evidence="1"/>
<dbReference type="EMBL" id="CP000875">
    <property type="protein sequence ID" value="ABX02807.1"/>
    <property type="molecule type" value="Genomic_DNA"/>
</dbReference>
<dbReference type="SMR" id="A9B5I2"/>
<dbReference type="FunCoup" id="A9B5I2">
    <property type="interactions" value="369"/>
</dbReference>
<dbReference type="STRING" id="316274.Haur_0155"/>
<dbReference type="KEGG" id="hau:Haur_0155"/>
<dbReference type="eggNOG" id="COG0118">
    <property type="taxonomic scope" value="Bacteria"/>
</dbReference>
<dbReference type="HOGENOM" id="CLU_071837_2_2_0"/>
<dbReference type="InParanoid" id="A9B5I2"/>
<dbReference type="UniPathway" id="UPA00031">
    <property type="reaction ID" value="UER00010"/>
</dbReference>
<dbReference type="Proteomes" id="UP000000787">
    <property type="component" value="Chromosome"/>
</dbReference>
<dbReference type="GO" id="GO:0005737">
    <property type="term" value="C:cytoplasm"/>
    <property type="evidence" value="ECO:0007669"/>
    <property type="project" value="UniProtKB-SubCell"/>
</dbReference>
<dbReference type="GO" id="GO:0004359">
    <property type="term" value="F:glutaminase activity"/>
    <property type="evidence" value="ECO:0007669"/>
    <property type="project" value="UniProtKB-EC"/>
</dbReference>
<dbReference type="GO" id="GO:0000107">
    <property type="term" value="F:imidazoleglycerol-phosphate synthase activity"/>
    <property type="evidence" value="ECO:0007669"/>
    <property type="project" value="UniProtKB-UniRule"/>
</dbReference>
<dbReference type="GO" id="GO:0016829">
    <property type="term" value="F:lyase activity"/>
    <property type="evidence" value="ECO:0007669"/>
    <property type="project" value="UniProtKB-KW"/>
</dbReference>
<dbReference type="GO" id="GO:0000105">
    <property type="term" value="P:L-histidine biosynthetic process"/>
    <property type="evidence" value="ECO:0007669"/>
    <property type="project" value="UniProtKB-UniRule"/>
</dbReference>
<dbReference type="CDD" id="cd01748">
    <property type="entry name" value="GATase1_IGP_Synthase"/>
    <property type="match status" value="1"/>
</dbReference>
<dbReference type="Gene3D" id="3.40.50.880">
    <property type="match status" value="1"/>
</dbReference>
<dbReference type="HAMAP" id="MF_00278">
    <property type="entry name" value="HisH"/>
    <property type="match status" value="1"/>
</dbReference>
<dbReference type="InterPro" id="IPR029062">
    <property type="entry name" value="Class_I_gatase-like"/>
</dbReference>
<dbReference type="InterPro" id="IPR017926">
    <property type="entry name" value="GATASE"/>
</dbReference>
<dbReference type="InterPro" id="IPR010139">
    <property type="entry name" value="Imidazole-glycPsynth_HisH"/>
</dbReference>
<dbReference type="NCBIfam" id="TIGR01855">
    <property type="entry name" value="IMP_synth_hisH"/>
    <property type="match status" value="1"/>
</dbReference>
<dbReference type="PANTHER" id="PTHR42701">
    <property type="entry name" value="IMIDAZOLE GLYCEROL PHOSPHATE SYNTHASE SUBUNIT HISH"/>
    <property type="match status" value="1"/>
</dbReference>
<dbReference type="PANTHER" id="PTHR42701:SF1">
    <property type="entry name" value="IMIDAZOLE GLYCEROL PHOSPHATE SYNTHASE SUBUNIT HISH"/>
    <property type="match status" value="1"/>
</dbReference>
<dbReference type="Pfam" id="PF00117">
    <property type="entry name" value="GATase"/>
    <property type="match status" value="1"/>
</dbReference>
<dbReference type="PIRSF" id="PIRSF000495">
    <property type="entry name" value="Amidotransf_hisH"/>
    <property type="match status" value="1"/>
</dbReference>
<dbReference type="SUPFAM" id="SSF52317">
    <property type="entry name" value="Class I glutamine amidotransferase-like"/>
    <property type="match status" value="1"/>
</dbReference>
<dbReference type="PROSITE" id="PS51273">
    <property type="entry name" value="GATASE_TYPE_1"/>
    <property type="match status" value="1"/>
</dbReference>
<keyword id="KW-0028">Amino-acid biosynthesis</keyword>
<keyword id="KW-0963">Cytoplasm</keyword>
<keyword id="KW-0315">Glutamine amidotransferase</keyword>
<keyword id="KW-0368">Histidine biosynthesis</keyword>
<keyword id="KW-0378">Hydrolase</keyword>
<keyword id="KW-0456">Lyase</keyword>